<organism>
    <name type="scientific">Candida glabrata (strain ATCC 2001 / BCRC 20586 / JCM 3761 / NBRC 0622 / NRRL Y-65 / CBS 138)</name>
    <name type="common">Yeast</name>
    <name type="synonym">Nakaseomyces glabratus</name>
    <dbReference type="NCBI Taxonomy" id="284593"/>
    <lineage>
        <taxon>Eukaryota</taxon>
        <taxon>Fungi</taxon>
        <taxon>Dikarya</taxon>
        <taxon>Ascomycota</taxon>
        <taxon>Saccharomycotina</taxon>
        <taxon>Saccharomycetes</taxon>
        <taxon>Saccharomycetales</taxon>
        <taxon>Saccharomycetaceae</taxon>
        <taxon>Nakaseomyces</taxon>
    </lineage>
</organism>
<reference key="1">
    <citation type="journal article" date="2004" name="Nature">
        <title>Genome evolution in yeasts.</title>
        <authorList>
            <person name="Dujon B."/>
            <person name="Sherman D."/>
            <person name="Fischer G."/>
            <person name="Durrens P."/>
            <person name="Casaregola S."/>
            <person name="Lafontaine I."/>
            <person name="de Montigny J."/>
            <person name="Marck C."/>
            <person name="Neuveglise C."/>
            <person name="Talla E."/>
            <person name="Goffard N."/>
            <person name="Frangeul L."/>
            <person name="Aigle M."/>
            <person name="Anthouard V."/>
            <person name="Babour A."/>
            <person name="Barbe V."/>
            <person name="Barnay S."/>
            <person name="Blanchin S."/>
            <person name="Beckerich J.-M."/>
            <person name="Beyne E."/>
            <person name="Bleykasten C."/>
            <person name="Boisrame A."/>
            <person name="Boyer J."/>
            <person name="Cattolico L."/>
            <person name="Confanioleri F."/>
            <person name="de Daruvar A."/>
            <person name="Despons L."/>
            <person name="Fabre E."/>
            <person name="Fairhead C."/>
            <person name="Ferry-Dumazet H."/>
            <person name="Groppi A."/>
            <person name="Hantraye F."/>
            <person name="Hennequin C."/>
            <person name="Jauniaux N."/>
            <person name="Joyet P."/>
            <person name="Kachouri R."/>
            <person name="Kerrest A."/>
            <person name="Koszul R."/>
            <person name="Lemaire M."/>
            <person name="Lesur I."/>
            <person name="Ma L."/>
            <person name="Muller H."/>
            <person name="Nicaud J.-M."/>
            <person name="Nikolski M."/>
            <person name="Oztas S."/>
            <person name="Ozier-Kalogeropoulos O."/>
            <person name="Pellenz S."/>
            <person name="Potier S."/>
            <person name="Richard G.-F."/>
            <person name="Straub M.-L."/>
            <person name="Suleau A."/>
            <person name="Swennen D."/>
            <person name="Tekaia F."/>
            <person name="Wesolowski-Louvel M."/>
            <person name="Westhof E."/>
            <person name="Wirth B."/>
            <person name="Zeniou-Meyer M."/>
            <person name="Zivanovic Y."/>
            <person name="Bolotin-Fukuhara M."/>
            <person name="Thierry A."/>
            <person name="Bouchier C."/>
            <person name="Caudron B."/>
            <person name="Scarpelli C."/>
            <person name="Gaillardin C."/>
            <person name="Weissenbach J."/>
            <person name="Wincker P."/>
            <person name="Souciet J.-L."/>
        </authorList>
    </citation>
    <scope>NUCLEOTIDE SEQUENCE [LARGE SCALE GENOMIC DNA]</scope>
    <source>
        <strain>ATCC 2001 / BCRC 20586 / JCM 3761 / NBRC 0622 / NRRL Y-65 / CBS 138</strain>
    </source>
</reference>
<feature type="chain" id="PRO_0000211593" description="DASH complex subunit DAD2">
    <location>
        <begin position="1"/>
        <end position="127"/>
    </location>
</feature>
<feature type="region of interest" description="Disordered" evidence="4">
    <location>
        <begin position="82"/>
        <end position="127"/>
    </location>
</feature>
<feature type="coiled-coil region" evidence="3">
    <location>
        <begin position="1"/>
        <end position="51"/>
    </location>
</feature>
<feature type="compositionally biased region" description="Basic and acidic residues" evidence="4">
    <location>
        <begin position="84"/>
        <end position="109"/>
    </location>
</feature>
<accession>Q6FTI5</accession>
<proteinExistence type="inferred from homology"/>
<name>DAD2_CANGA</name>
<evidence type="ECO:0000250" key="1">
    <source>
        <dbReference type="UniProtKB" id="P36162"/>
    </source>
</evidence>
<evidence type="ECO:0000250" key="2">
    <source>
        <dbReference type="UniProtKB" id="Q9UTG8"/>
    </source>
</evidence>
<evidence type="ECO:0000255" key="3"/>
<evidence type="ECO:0000256" key="4">
    <source>
        <dbReference type="SAM" id="MobiDB-lite"/>
    </source>
</evidence>
<evidence type="ECO:0000305" key="5"/>
<dbReference type="EMBL" id="CR380953">
    <property type="protein sequence ID" value="CAG59386.1"/>
    <property type="molecule type" value="Genomic_DNA"/>
</dbReference>
<dbReference type="RefSeq" id="XP_446459.1">
    <property type="nucleotide sequence ID" value="XM_446459.1"/>
</dbReference>
<dbReference type="SMR" id="Q6FTI5"/>
<dbReference type="FunCoup" id="Q6FTI5">
    <property type="interactions" value="44"/>
</dbReference>
<dbReference type="STRING" id="284593.Q6FTI5"/>
<dbReference type="EnsemblFungi" id="CAGL0G02233g-T">
    <property type="protein sequence ID" value="CAGL0G02233g-T-p1"/>
    <property type="gene ID" value="CAGL0G02233g"/>
</dbReference>
<dbReference type="KEGG" id="cgr:2888276"/>
<dbReference type="CGD" id="CAL0129325">
    <property type="gene designation" value="CAGL0G02233g"/>
</dbReference>
<dbReference type="VEuPathDB" id="FungiDB:CAGL0G02233g"/>
<dbReference type="eggNOG" id="ENOG502S93M">
    <property type="taxonomic scope" value="Eukaryota"/>
</dbReference>
<dbReference type="HOGENOM" id="CLU_138063_1_0_1"/>
<dbReference type="InParanoid" id="Q6FTI5"/>
<dbReference type="Proteomes" id="UP000002428">
    <property type="component" value="Chromosome G"/>
</dbReference>
<dbReference type="GO" id="GO:0005737">
    <property type="term" value="C:cytoplasm"/>
    <property type="evidence" value="ECO:0007669"/>
    <property type="project" value="UniProtKB-KW"/>
</dbReference>
<dbReference type="GO" id="GO:0042729">
    <property type="term" value="C:DASH complex"/>
    <property type="evidence" value="ECO:0000250"/>
    <property type="project" value="UniProtKB"/>
</dbReference>
<dbReference type="GO" id="GO:0005874">
    <property type="term" value="C:microtubule"/>
    <property type="evidence" value="ECO:0007669"/>
    <property type="project" value="UniProtKB-KW"/>
</dbReference>
<dbReference type="GO" id="GO:1990023">
    <property type="term" value="C:mitotic spindle midzone"/>
    <property type="evidence" value="ECO:0007669"/>
    <property type="project" value="TreeGrafter"/>
</dbReference>
<dbReference type="GO" id="GO:0044732">
    <property type="term" value="C:mitotic spindle pole body"/>
    <property type="evidence" value="ECO:0007669"/>
    <property type="project" value="TreeGrafter"/>
</dbReference>
<dbReference type="GO" id="GO:0051010">
    <property type="term" value="F:microtubule plus-end binding"/>
    <property type="evidence" value="ECO:0007669"/>
    <property type="project" value="EnsemblFungi"/>
</dbReference>
<dbReference type="GO" id="GO:0008608">
    <property type="term" value="P:attachment of spindle microtubules to kinetochore"/>
    <property type="evidence" value="ECO:0000250"/>
    <property type="project" value="UniProtKB"/>
</dbReference>
<dbReference type="GO" id="GO:0051301">
    <property type="term" value="P:cell division"/>
    <property type="evidence" value="ECO:0007669"/>
    <property type="project" value="UniProtKB-KW"/>
</dbReference>
<dbReference type="GO" id="GO:1990758">
    <property type="term" value="P:mitotic sister chromatid biorientation"/>
    <property type="evidence" value="ECO:0000250"/>
    <property type="project" value="UniProtKB"/>
</dbReference>
<dbReference type="GO" id="GO:0051987">
    <property type="term" value="P:positive regulation of attachment of spindle microtubules to kinetochore"/>
    <property type="evidence" value="ECO:0007669"/>
    <property type="project" value="EnsemblFungi"/>
</dbReference>
<dbReference type="GO" id="GO:0031116">
    <property type="term" value="P:positive regulation of microtubule polymerization"/>
    <property type="evidence" value="ECO:0007669"/>
    <property type="project" value="EnsemblFungi"/>
</dbReference>
<dbReference type="GO" id="GO:1990976">
    <property type="term" value="P:protein transport along microtubule to mitotic spindle pole body"/>
    <property type="evidence" value="ECO:0000250"/>
    <property type="project" value="UniProtKB"/>
</dbReference>
<dbReference type="InterPro" id="IPR013963">
    <property type="entry name" value="DASH_Dad2"/>
</dbReference>
<dbReference type="PANTHER" id="PTHR28036">
    <property type="entry name" value="DASH COMPLEX SUBUNIT DAD2"/>
    <property type="match status" value="1"/>
</dbReference>
<dbReference type="PANTHER" id="PTHR28036:SF1">
    <property type="entry name" value="DASH COMPLEX SUBUNIT DAD2"/>
    <property type="match status" value="1"/>
</dbReference>
<dbReference type="Pfam" id="PF08654">
    <property type="entry name" value="DASH_Dad2"/>
    <property type="match status" value="1"/>
</dbReference>
<protein>
    <recommendedName>
        <fullName>DASH complex subunit DAD2</fullName>
    </recommendedName>
    <alternativeName>
        <fullName>Outer kinetochore protein DAD2</fullName>
    </alternativeName>
</protein>
<comment type="function">
    <text evidence="1">Component of the DASH complex that connects microtubules with kinetochores and couples microtubule depolymerisation to chromosome movement; it is involved in retrieving kinetochores to the spindle poles before their re-orientation on the spindle in early mitosis and allows microtubule depolymerization to pull chromosomes apart and resist detachment during anaphase. Kinetochores, consisting of a centromere-associated inner segment and a microtubule-contacting outer segment, play a crucial role in chromosome segregation by mediating the physical connection between centromeric DNA and microtubules. Kinetochores also serve as an input point for the spindle assembly checkpoint, which delays anaphase until all chromosomes have bioriented on the mitotic spindle.</text>
</comment>
<comment type="subunit">
    <text evidence="1 2">Component of the DASH complex consisting of ASK1, DAD1, DAD2, DAD3, DAD4, DAM1, DUO1, HSK3, SPC19 and SPC34, with a stoichiometry of one copy of each subunit per complex. Multiple DASH complexes oligomerize to form a ring that encircles spindle microtubules and organizes the rod-like NDC80 complexes of the outer kinetochore. DASH complex oligomerization strengthens microtubule attachments (By similarity). On cytoplasmic microtubules, DASH complexes appear to form patches instead of rings (By similarity).</text>
</comment>
<comment type="subcellular location">
    <subcellularLocation>
        <location evidence="1">Nucleus</location>
    </subcellularLocation>
    <subcellularLocation>
        <location evidence="1">Cytoplasm</location>
        <location evidence="1">Cytoskeleton</location>
        <location evidence="1">Spindle</location>
    </subcellularLocation>
    <subcellularLocation>
        <location evidence="1">Chromosome</location>
        <location evidence="1">Centromere</location>
        <location evidence="1">Kinetochore</location>
    </subcellularLocation>
</comment>
<comment type="similarity">
    <text evidence="5">Belongs to the DASH complex DAD2 family.</text>
</comment>
<keyword id="KW-0131">Cell cycle</keyword>
<keyword id="KW-0132">Cell division</keyword>
<keyword id="KW-0137">Centromere</keyword>
<keyword id="KW-0158">Chromosome</keyword>
<keyword id="KW-0159">Chromosome partition</keyword>
<keyword id="KW-0175">Coiled coil</keyword>
<keyword id="KW-0963">Cytoplasm</keyword>
<keyword id="KW-0206">Cytoskeleton</keyword>
<keyword id="KW-0995">Kinetochore</keyword>
<keyword id="KW-0493">Microtubule</keyword>
<keyword id="KW-0498">Mitosis</keyword>
<keyword id="KW-0539">Nucleus</keyword>
<keyword id="KW-1185">Reference proteome</keyword>
<sequence>MDGLEQQKLAKQQELAALKRITALTDQMRTELDEMSIEVSKINKNAESVANVMANWDSIRKYISEASLGLLRYAEGDYQVGAWDGKENKSDKSNADKSYQSDDEHKTEPLPEALVRISVANNEESRK</sequence>
<gene>
    <name type="primary">DAD2</name>
    <name type="ordered locus">CAGL0G02233g</name>
</gene>